<sequence>MSTQLQHARDGTVTDAMRRVADREGRDPEVVREAVADGHAVIPANHHHDALDPMIIGRDFATKVNANIGNSDTTGDIDDELEKLHTAVHYGADTVMDLSTGENLDGIRTANIDNSPVPVGTVPIYEAVTRVEDVTDITPDLLIDVVEKQAKQGVDYMTLHAGVLAEHLPLTDDRTTGIVSRGGSILSQWMTEHGEQNPLYTHYDELCEILQAHDVTISLGDGLRPGSVADASDDAQFAELDTLGELTRRAWDHGVQAMVEGPGHVPMDQIRANVDRQQEVCDGAPFYVLGPLVTDIAPGYDHITSAIGATEAARAGAAMLCYVTPKEHLGLPDAEDVRDGMAAYRIAAHAGDVAAGKPGARDWDDALSEARYNFDWNRQFDLALDPERAQAFHDQTLPGDNYKDARFCSMCGVDFCSMRIDQDARDAGDDADDMTELTTETDLSESAAAEVNRPPTGTHDAPAAEQAPSPGDDDDD</sequence>
<organism>
    <name type="scientific">Halobacterium salinarum (strain ATCC 700922 / JCM 11081 / NRC-1)</name>
    <name type="common">Halobacterium halobium</name>
    <dbReference type="NCBI Taxonomy" id="64091"/>
    <lineage>
        <taxon>Archaea</taxon>
        <taxon>Methanobacteriati</taxon>
        <taxon>Methanobacteriota</taxon>
        <taxon>Stenosarchaea group</taxon>
        <taxon>Halobacteria</taxon>
        <taxon>Halobacteriales</taxon>
        <taxon>Halobacteriaceae</taxon>
        <taxon>Halobacterium</taxon>
        <taxon>Halobacterium salinarum NRC-34001</taxon>
    </lineage>
</organism>
<keyword id="KW-0004">4Fe-4S</keyword>
<keyword id="KW-0408">Iron</keyword>
<keyword id="KW-0411">Iron-sulfur</keyword>
<keyword id="KW-0456">Lyase</keyword>
<keyword id="KW-0479">Metal-binding</keyword>
<keyword id="KW-1185">Reference proteome</keyword>
<keyword id="KW-0949">S-adenosyl-L-methionine</keyword>
<keyword id="KW-0784">Thiamine biosynthesis</keyword>
<keyword id="KW-0862">Zinc</keyword>
<evidence type="ECO:0000255" key="1">
    <source>
        <dbReference type="HAMAP-Rule" id="MF_00089"/>
    </source>
</evidence>
<evidence type="ECO:0000256" key="2">
    <source>
        <dbReference type="SAM" id="MobiDB-lite"/>
    </source>
</evidence>
<reference key="1">
    <citation type="journal article" date="2000" name="Proc. Natl. Acad. Sci. U.S.A.">
        <title>Genome sequence of Halobacterium species NRC-1.</title>
        <authorList>
            <person name="Ng W.V."/>
            <person name="Kennedy S.P."/>
            <person name="Mahairas G.G."/>
            <person name="Berquist B."/>
            <person name="Pan M."/>
            <person name="Shukla H.D."/>
            <person name="Lasky S.R."/>
            <person name="Baliga N.S."/>
            <person name="Thorsson V."/>
            <person name="Sbrogna J."/>
            <person name="Swartzell S."/>
            <person name="Weir D."/>
            <person name="Hall J."/>
            <person name="Dahl T.A."/>
            <person name="Welti R."/>
            <person name="Goo Y.A."/>
            <person name="Leithauser B."/>
            <person name="Keller K."/>
            <person name="Cruz R."/>
            <person name="Danson M.J."/>
            <person name="Hough D.W."/>
            <person name="Maddocks D.G."/>
            <person name="Jablonski P.E."/>
            <person name="Krebs M.P."/>
            <person name="Angevine C.M."/>
            <person name="Dale H."/>
            <person name="Isenbarger T.A."/>
            <person name="Peck R.F."/>
            <person name="Pohlschroder M."/>
            <person name="Spudich J.L."/>
            <person name="Jung K.-H."/>
            <person name="Alam M."/>
            <person name="Freitas T."/>
            <person name="Hou S."/>
            <person name="Daniels C.J."/>
            <person name="Dennis P.P."/>
            <person name="Omer A.D."/>
            <person name="Ebhardt H."/>
            <person name="Lowe T.M."/>
            <person name="Liang P."/>
            <person name="Riley M."/>
            <person name="Hood L."/>
            <person name="DasSarma S."/>
        </authorList>
    </citation>
    <scope>NUCLEOTIDE SEQUENCE [LARGE SCALE GENOMIC DNA]</scope>
    <source>
        <strain>ATCC 700922 / JCM 11081 / NRC-1</strain>
    </source>
</reference>
<accession>Q9HRG2</accession>
<name>THIC_HALSA</name>
<proteinExistence type="inferred from homology"/>
<gene>
    <name evidence="1" type="primary">thiC</name>
    <name type="ordered locus">VNG_0715G</name>
</gene>
<feature type="chain" id="PRO_0000152859" description="Phosphomethylpyrimidine synthase">
    <location>
        <begin position="1"/>
        <end position="476"/>
    </location>
</feature>
<feature type="region of interest" description="Disordered" evidence="2">
    <location>
        <begin position="1"/>
        <end position="27"/>
    </location>
</feature>
<feature type="region of interest" description="Disordered" evidence="2">
    <location>
        <begin position="425"/>
        <end position="476"/>
    </location>
</feature>
<feature type="compositionally biased region" description="Basic and acidic residues" evidence="2">
    <location>
        <begin position="7"/>
        <end position="27"/>
    </location>
</feature>
<feature type="compositionally biased region" description="Low complexity" evidence="2">
    <location>
        <begin position="436"/>
        <end position="447"/>
    </location>
</feature>
<feature type="binding site" evidence="1">
    <location>
        <position position="67"/>
    </location>
    <ligand>
        <name>substrate</name>
    </ligand>
</feature>
<feature type="binding site" evidence="1">
    <location>
        <position position="96"/>
    </location>
    <ligand>
        <name>substrate</name>
    </ligand>
</feature>
<feature type="binding site" evidence="1">
    <location>
        <position position="125"/>
    </location>
    <ligand>
        <name>substrate</name>
    </ligand>
</feature>
<feature type="binding site" evidence="1">
    <location>
        <position position="160"/>
    </location>
    <ligand>
        <name>substrate</name>
    </ligand>
</feature>
<feature type="binding site" evidence="1">
    <location>
        <begin position="180"/>
        <end position="182"/>
    </location>
    <ligand>
        <name>substrate</name>
    </ligand>
</feature>
<feature type="binding site" evidence="1">
    <location>
        <begin position="221"/>
        <end position="224"/>
    </location>
    <ligand>
        <name>substrate</name>
    </ligand>
</feature>
<feature type="binding site" evidence="1">
    <location>
        <position position="260"/>
    </location>
    <ligand>
        <name>substrate</name>
    </ligand>
</feature>
<feature type="binding site" evidence="1">
    <location>
        <position position="264"/>
    </location>
    <ligand>
        <name>Zn(2+)</name>
        <dbReference type="ChEBI" id="CHEBI:29105"/>
    </ligand>
</feature>
<feature type="binding site" evidence="1">
    <location>
        <position position="287"/>
    </location>
    <ligand>
        <name>substrate</name>
    </ligand>
</feature>
<feature type="binding site" evidence="1">
    <location>
        <position position="328"/>
    </location>
    <ligand>
        <name>Zn(2+)</name>
        <dbReference type="ChEBI" id="CHEBI:29105"/>
    </ligand>
</feature>
<feature type="binding site" evidence="1">
    <location>
        <position position="408"/>
    </location>
    <ligand>
        <name>[4Fe-4S] cluster</name>
        <dbReference type="ChEBI" id="CHEBI:49883"/>
        <note>4Fe-4S-S-AdoMet</note>
    </ligand>
</feature>
<feature type="binding site" evidence="1">
    <location>
        <position position="411"/>
    </location>
    <ligand>
        <name>[4Fe-4S] cluster</name>
        <dbReference type="ChEBI" id="CHEBI:49883"/>
        <note>4Fe-4S-S-AdoMet</note>
    </ligand>
</feature>
<feature type="binding site" evidence="1">
    <location>
        <position position="416"/>
    </location>
    <ligand>
        <name>[4Fe-4S] cluster</name>
        <dbReference type="ChEBI" id="CHEBI:49883"/>
        <note>4Fe-4S-S-AdoMet</note>
    </ligand>
</feature>
<dbReference type="EC" id="4.1.99.17" evidence="1"/>
<dbReference type="EMBL" id="AE004437">
    <property type="protein sequence ID" value="AAG19196.1"/>
    <property type="molecule type" value="Genomic_DNA"/>
</dbReference>
<dbReference type="PIR" id="H84228">
    <property type="entry name" value="H84228"/>
</dbReference>
<dbReference type="RefSeq" id="WP_010902492.1">
    <property type="nucleotide sequence ID" value="NC_002607.1"/>
</dbReference>
<dbReference type="SMR" id="Q9HRG2"/>
<dbReference type="FunCoup" id="Q9HRG2">
    <property type="interactions" value="87"/>
</dbReference>
<dbReference type="STRING" id="64091.VNG_0715G"/>
<dbReference type="PaxDb" id="64091-VNG_0715G"/>
<dbReference type="GeneID" id="89349164"/>
<dbReference type="KEGG" id="hal:VNG_0715G"/>
<dbReference type="PATRIC" id="fig|64091.14.peg.544"/>
<dbReference type="HOGENOM" id="CLU_013181_2_1_2"/>
<dbReference type="InParanoid" id="Q9HRG2"/>
<dbReference type="OrthoDB" id="335406at2157"/>
<dbReference type="PhylomeDB" id="Q9HRG2"/>
<dbReference type="UniPathway" id="UPA00060"/>
<dbReference type="Proteomes" id="UP000000554">
    <property type="component" value="Chromosome"/>
</dbReference>
<dbReference type="GO" id="GO:0051539">
    <property type="term" value="F:4 iron, 4 sulfur cluster binding"/>
    <property type="evidence" value="ECO:0007669"/>
    <property type="project" value="UniProtKB-KW"/>
</dbReference>
<dbReference type="GO" id="GO:0016830">
    <property type="term" value="F:carbon-carbon lyase activity"/>
    <property type="evidence" value="ECO:0007669"/>
    <property type="project" value="InterPro"/>
</dbReference>
<dbReference type="GO" id="GO:0008270">
    <property type="term" value="F:zinc ion binding"/>
    <property type="evidence" value="ECO:0007669"/>
    <property type="project" value="UniProtKB-UniRule"/>
</dbReference>
<dbReference type="GO" id="GO:0009228">
    <property type="term" value="P:thiamine biosynthetic process"/>
    <property type="evidence" value="ECO:0007669"/>
    <property type="project" value="UniProtKB-KW"/>
</dbReference>
<dbReference type="GO" id="GO:0009229">
    <property type="term" value="P:thiamine diphosphate biosynthetic process"/>
    <property type="evidence" value="ECO:0007669"/>
    <property type="project" value="UniProtKB-UniRule"/>
</dbReference>
<dbReference type="FunFam" id="3.20.20.540:FF:000001">
    <property type="entry name" value="Phosphomethylpyrimidine synthase"/>
    <property type="match status" value="1"/>
</dbReference>
<dbReference type="Gene3D" id="6.10.250.620">
    <property type="match status" value="1"/>
</dbReference>
<dbReference type="Gene3D" id="3.20.20.540">
    <property type="entry name" value="Radical SAM ThiC family, central domain"/>
    <property type="match status" value="1"/>
</dbReference>
<dbReference type="HAMAP" id="MF_00089">
    <property type="entry name" value="ThiC"/>
    <property type="match status" value="1"/>
</dbReference>
<dbReference type="InterPro" id="IPR037509">
    <property type="entry name" value="ThiC"/>
</dbReference>
<dbReference type="InterPro" id="IPR038521">
    <property type="entry name" value="ThiC/Bza_core_dom"/>
</dbReference>
<dbReference type="InterPro" id="IPR002817">
    <property type="entry name" value="ThiC/BzaA/B"/>
</dbReference>
<dbReference type="NCBIfam" id="NF006763">
    <property type="entry name" value="PRK09284.1"/>
    <property type="match status" value="1"/>
</dbReference>
<dbReference type="NCBIfam" id="NF009895">
    <property type="entry name" value="PRK13352.1"/>
    <property type="match status" value="1"/>
</dbReference>
<dbReference type="NCBIfam" id="TIGR00190">
    <property type="entry name" value="thiC"/>
    <property type="match status" value="1"/>
</dbReference>
<dbReference type="PANTHER" id="PTHR30557:SF1">
    <property type="entry name" value="PHOSPHOMETHYLPYRIMIDINE SYNTHASE, CHLOROPLASTIC"/>
    <property type="match status" value="1"/>
</dbReference>
<dbReference type="PANTHER" id="PTHR30557">
    <property type="entry name" value="THIAMINE BIOSYNTHESIS PROTEIN THIC"/>
    <property type="match status" value="1"/>
</dbReference>
<dbReference type="Pfam" id="PF01964">
    <property type="entry name" value="ThiC_Rad_SAM"/>
    <property type="match status" value="1"/>
</dbReference>
<dbReference type="SFLD" id="SFLDF00407">
    <property type="entry name" value="phosphomethylpyrimidine_syntha"/>
    <property type="match status" value="1"/>
</dbReference>
<dbReference type="SFLD" id="SFLDG01114">
    <property type="entry name" value="phosphomethylpyrimidine_syntha"/>
    <property type="match status" value="1"/>
</dbReference>
<dbReference type="SFLD" id="SFLDS00113">
    <property type="entry name" value="Radical_SAM_Phosphomethylpyrim"/>
    <property type="match status" value="1"/>
</dbReference>
<protein>
    <recommendedName>
        <fullName evidence="1">Phosphomethylpyrimidine synthase</fullName>
        <ecNumber evidence="1">4.1.99.17</ecNumber>
    </recommendedName>
    <alternativeName>
        <fullName evidence="1">Hydroxymethylpyrimidine phosphate synthase</fullName>
        <shortName evidence="1">HMP-P synthase</shortName>
        <shortName evidence="1">HMP-phosphate synthase</shortName>
        <shortName evidence="1">HMPP synthase</shortName>
    </alternativeName>
    <alternativeName>
        <fullName evidence="1">Thiamine biosynthesis protein ThiC</fullName>
    </alternativeName>
</protein>
<comment type="function">
    <text evidence="1">Catalyzes the synthesis of the hydroxymethylpyrimidine phosphate (HMP-P) moiety of thiamine from aminoimidazole ribotide (AIR) in a radical S-adenosyl-L-methionine (SAM)-dependent reaction.</text>
</comment>
<comment type="catalytic activity">
    <reaction evidence="1">
        <text>5-amino-1-(5-phospho-beta-D-ribosyl)imidazole + S-adenosyl-L-methionine = 4-amino-2-methyl-5-(phosphooxymethyl)pyrimidine + CO + 5'-deoxyadenosine + formate + L-methionine + 3 H(+)</text>
        <dbReference type="Rhea" id="RHEA:24840"/>
        <dbReference type="ChEBI" id="CHEBI:15378"/>
        <dbReference type="ChEBI" id="CHEBI:15740"/>
        <dbReference type="ChEBI" id="CHEBI:17245"/>
        <dbReference type="ChEBI" id="CHEBI:17319"/>
        <dbReference type="ChEBI" id="CHEBI:57844"/>
        <dbReference type="ChEBI" id="CHEBI:58354"/>
        <dbReference type="ChEBI" id="CHEBI:59789"/>
        <dbReference type="ChEBI" id="CHEBI:137981"/>
        <dbReference type="EC" id="4.1.99.17"/>
    </reaction>
</comment>
<comment type="cofactor">
    <cofactor evidence="1">
        <name>[4Fe-4S] cluster</name>
        <dbReference type="ChEBI" id="CHEBI:49883"/>
    </cofactor>
    <text evidence="1">Binds 1 [4Fe-4S] cluster per subunit. The cluster is coordinated with 3 cysteines and an exchangeable S-adenosyl-L-methionine.</text>
</comment>
<comment type="pathway">
    <text evidence="1">Cofactor biosynthesis; thiamine diphosphate biosynthesis.</text>
</comment>
<comment type="similarity">
    <text evidence="1">Belongs to the ThiC family.</text>
</comment>